<gene>
    <name evidence="1" type="primary">leuS</name>
    <name type="ordered locus">MAP_0048</name>
</gene>
<sequence length="969" mass="106918">MTESPTTSPATGSGAAAPDSDAPPYRYTAALAGRIEGSWQDTWAKLGTFNVPNPVGSLAPTDGTPVPEDKLFVQDMFPYPSGEGLHVGHPLGYIATDVYARYFRMTGRNVLHALGFDAFGLPAEQYAVQTGTHPRTRTEANVVNFRRQLGRLGLGHDSRRSFSTTDVEFYKWTQWIFLQIYNAWFDPAANKARPIAELVAEFDSGARSLDDGRNWSELSAGERADVIDSHRLVYRADSMVNWCPGLGTVLANEEVTADGRSDRGNFPVFRKRLRQWMMRITAYSDRLLDDLDLLDWPEPVKTMQRNWIGRSTGAKALFAATGADGAALDIEVFTTRPDTLFGATYMVLAPEHELVDELVAPAWPDGTDPRWTYGAATPGESVAAYRRAIASKSDLERQESKAKTGVFLGSYATNPTNGKPVPIFIADYVLAGYGTGAIMAVPGHDQRDWDFAHEFGLPIVEVIAGGDISEGAYAGDGVLVNSGYLDGLDVAAAKEAITARLEAEGRGCARVEYKLRDWLFARQRYWGEPFPIVYDSDGRPHALDEAALPVELPDVPDYSPVLFDPDDADSEPSPPLAKATDWVHVELDLGDGLKPYSRDTNVMPQWAGSSWYELRYTDPHNSERFCAKENEAYWMGPRPAEHGPQDPGGVDLYVGGAEHAVLHLLYARFWHKVLYDLGHVSSREPYRRLVNQGYIQAFAYTDSRGSYVPAEEVVERDGRFFYRGPDGEIEVFQEFGKIGKSLKNSISPDEICDDYGADTLRVYEMSMGPLEASRPWATKDVVGAHRFLQRVWRLVVDEQTGETRVVDGAGRDLPTGTLRLLHRTIAGVSEDYAALRNNTAVAKLIEYTNHLTKEHRDAVPRAAVEPLVLMLAPLAPHMAEELWLRLGHTTSLAHGPFPVADPAYLVEDTVEYPVQVNGKVRGRVTVAADADRDTLEAAALADEKVLAFLAGAQPRKVIVVPGRLVNLVV</sequence>
<reference key="1">
    <citation type="journal article" date="2005" name="Proc. Natl. Acad. Sci. U.S.A.">
        <title>The complete genome sequence of Mycobacterium avium subspecies paratuberculosis.</title>
        <authorList>
            <person name="Li L."/>
            <person name="Bannantine J.P."/>
            <person name="Zhang Q."/>
            <person name="Amonsin A."/>
            <person name="May B.J."/>
            <person name="Alt D."/>
            <person name="Banerji N."/>
            <person name="Kanjilal S."/>
            <person name="Kapur V."/>
        </authorList>
    </citation>
    <scope>NUCLEOTIDE SEQUENCE [LARGE SCALE GENOMIC DNA]</scope>
    <source>
        <strain>ATCC BAA-968 / K-10</strain>
    </source>
</reference>
<dbReference type="EC" id="6.1.1.4" evidence="1"/>
<dbReference type="EMBL" id="AE016958">
    <property type="protein sequence ID" value="AAS02365.1"/>
    <property type="molecule type" value="Genomic_DNA"/>
</dbReference>
<dbReference type="RefSeq" id="WP_003876813.1">
    <property type="nucleotide sequence ID" value="NZ_CP106873.1"/>
</dbReference>
<dbReference type="SMR" id="Q744V3"/>
<dbReference type="STRING" id="262316.MAP_0048"/>
<dbReference type="KEGG" id="mpa:MAP_0048"/>
<dbReference type="PATRIC" id="fig|262316.17.peg.52"/>
<dbReference type="eggNOG" id="COG0495">
    <property type="taxonomic scope" value="Bacteria"/>
</dbReference>
<dbReference type="HOGENOM" id="CLU_004427_0_0_11"/>
<dbReference type="Proteomes" id="UP000000580">
    <property type="component" value="Chromosome"/>
</dbReference>
<dbReference type="GO" id="GO:0005829">
    <property type="term" value="C:cytosol"/>
    <property type="evidence" value="ECO:0007669"/>
    <property type="project" value="TreeGrafter"/>
</dbReference>
<dbReference type="GO" id="GO:0002161">
    <property type="term" value="F:aminoacyl-tRNA deacylase activity"/>
    <property type="evidence" value="ECO:0007669"/>
    <property type="project" value="InterPro"/>
</dbReference>
<dbReference type="GO" id="GO:0005524">
    <property type="term" value="F:ATP binding"/>
    <property type="evidence" value="ECO:0007669"/>
    <property type="project" value="UniProtKB-UniRule"/>
</dbReference>
<dbReference type="GO" id="GO:0004823">
    <property type="term" value="F:leucine-tRNA ligase activity"/>
    <property type="evidence" value="ECO:0007669"/>
    <property type="project" value="UniProtKB-UniRule"/>
</dbReference>
<dbReference type="GO" id="GO:0006429">
    <property type="term" value="P:leucyl-tRNA aminoacylation"/>
    <property type="evidence" value="ECO:0007669"/>
    <property type="project" value="UniProtKB-UniRule"/>
</dbReference>
<dbReference type="CDD" id="cd07958">
    <property type="entry name" value="Anticodon_Ia_Leu_BEm"/>
    <property type="match status" value="1"/>
</dbReference>
<dbReference type="FunFam" id="3.40.50.620:FF:000060">
    <property type="entry name" value="Leucine--tRNA ligase"/>
    <property type="match status" value="1"/>
</dbReference>
<dbReference type="FunFam" id="3.40.50.620:FF:000087">
    <property type="entry name" value="Leucine--tRNA ligase"/>
    <property type="match status" value="1"/>
</dbReference>
<dbReference type="FunFam" id="3.90.740.10:FF:000017">
    <property type="entry name" value="Leucine--tRNA ligase"/>
    <property type="match status" value="1"/>
</dbReference>
<dbReference type="FunFam" id="1.10.730.10:FF:000011">
    <property type="entry name" value="Leucine--tRNA ligase chloroplastic/mitochondrial"/>
    <property type="match status" value="1"/>
</dbReference>
<dbReference type="Gene3D" id="3.40.50.620">
    <property type="entry name" value="HUPs"/>
    <property type="match status" value="3"/>
</dbReference>
<dbReference type="Gene3D" id="1.10.730.10">
    <property type="entry name" value="Isoleucyl-tRNA Synthetase, Domain 1"/>
    <property type="match status" value="1"/>
</dbReference>
<dbReference type="Gene3D" id="3.90.740.10">
    <property type="entry name" value="Valyl/Leucyl/Isoleucyl-tRNA synthetase, editing domain"/>
    <property type="match status" value="1"/>
</dbReference>
<dbReference type="HAMAP" id="MF_00049_B">
    <property type="entry name" value="Leu_tRNA_synth_B"/>
    <property type="match status" value="1"/>
</dbReference>
<dbReference type="InterPro" id="IPR001412">
    <property type="entry name" value="aa-tRNA-synth_I_CS"/>
</dbReference>
<dbReference type="InterPro" id="IPR002302">
    <property type="entry name" value="Leu-tRNA-ligase"/>
</dbReference>
<dbReference type="InterPro" id="IPR025709">
    <property type="entry name" value="Leu_tRNA-synth_edit"/>
</dbReference>
<dbReference type="InterPro" id="IPR013155">
    <property type="entry name" value="M/V/L/I-tRNA-synth_anticd-bd"/>
</dbReference>
<dbReference type="InterPro" id="IPR015413">
    <property type="entry name" value="Methionyl/Leucyl_tRNA_Synth"/>
</dbReference>
<dbReference type="InterPro" id="IPR014729">
    <property type="entry name" value="Rossmann-like_a/b/a_fold"/>
</dbReference>
<dbReference type="InterPro" id="IPR009080">
    <property type="entry name" value="tRNAsynth_Ia_anticodon-bd"/>
</dbReference>
<dbReference type="InterPro" id="IPR009008">
    <property type="entry name" value="Val/Leu/Ile-tRNA-synth_edit"/>
</dbReference>
<dbReference type="NCBIfam" id="TIGR00396">
    <property type="entry name" value="leuS_bact"/>
    <property type="match status" value="1"/>
</dbReference>
<dbReference type="PANTHER" id="PTHR43740:SF2">
    <property type="entry name" value="LEUCINE--TRNA LIGASE, MITOCHONDRIAL"/>
    <property type="match status" value="1"/>
</dbReference>
<dbReference type="PANTHER" id="PTHR43740">
    <property type="entry name" value="LEUCYL-TRNA SYNTHETASE"/>
    <property type="match status" value="1"/>
</dbReference>
<dbReference type="Pfam" id="PF08264">
    <property type="entry name" value="Anticodon_1"/>
    <property type="match status" value="1"/>
</dbReference>
<dbReference type="Pfam" id="PF13603">
    <property type="entry name" value="tRNA-synt_1_2"/>
    <property type="match status" value="1"/>
</dbReference>
<dbReference type="Pfam" id="PF09334">
    <property type="entry name" value="tRNA-synt_1g"/>
    <property type="match status" value="1"/>
</dbReference>
<dbReference type="PRINTS" id="PR00985">
    <property type="entry name" value="TRNASYNTHLEU"/>
</dbReference>
<dbReference type="SUPFAM" id="SSF47323">
    <property type="entry name" value="Anticodon-binding domain of a subclass of class I aminoacyl-tRNA synthetases"/>
    <property type="match status" value="1"/>
</dbReference>
<dbReference type="SUPFAM" id="SSF52374">
    <property type="entry name" value="Nucleotidylyl transferase"/>
    <property type="match status" value="1"/>
</dbReference>
<dbReference type="SUPFAM" id="SSF50677">
    <property type="entry name" value="ValRS/IleRS/LeuRS editing domain"/>
    <property type="match status" value="1"/>
</dbReference>
<dbReference type="PROSITE" id="PS00178">
    <property type="entry name" value="AA_TRNA_LIGASE_I"/>
    <property type="match status" value="1"/>
</dbReference>
<evidence type="ECO:0000255" key="1">
    <source>
        <dbReference type="HAMAP-Rule" id="MF_00049"/>
    </source>
</evidence>
<evidence type="ECO:0000256" key="2">
    <source>
        <dbReference type="SAM" id="MobiDB-lite"/>
    </source>
</evidence>
<accession>Q744V3</accession>
<comment type="catalytic activity">
    <reaction evidence="1">
        <text>tRNA(Leu) + L-leucine + ATP = L-leucyl-tRNA(Leu) + AMP + diphosphate</text>
        <dbReference type="Rhea" id="RHEA:11688"/>
        <dbReference type="Rhea" id="RHEA-COMP:9613"/>
        <dbReference type="Rhea" id="RHEA-COMP:9622"/>
        <dbReference type="ChEBI" id="CHEBI:30616"/>
        <dbReference type="ChEBI" id="CHEBI:33019"/>
        <dbReference type="ChEBI" id="CHEBI:57427"/>
        <dbReference type="ChEBI" id="CHEBI:78442"/>
        <dbReference type="ChEBI" id="CHEBI:78494"/>
        <dbReference type="ChEBI" id="CHEBI:456215"/>
        <dbReference type="EC" id="6.1.1.4"/>
    </reaction>
</comment>
<comment type="subcellular location">
    <subcellularLocation>
        <location evidence="1">Cytoplasm</location>
    </subcellularLocation>
</comment>
<comment type="similarity">
    <text evidence="1">Belongs to the class-I aminoacyl-tRNA synthetase family.</text>
</comment>
<protein>
    <recommendedName>
        <fullName evidence="1">Leucine--tRNA ligase</fullName>
        <ecNumber evidence="1">6.1.1.4</ecNumber>
    </recommendedName>
    <alternativeName>
        <fullName evidence="1">Leucyl-tRNA synthetase</fullName>
        <shortName evidence="1">LeuRS</shortName>
    </alternativeName>
</protein>
<proteinExistence type="inferred from homology"/>
<feature type="chain" id="PRO_0000152048" description="Leucine--tRNA ligase">
    <location>
        <begin position="1"/>
        <end position="969"/>
    </location>
</feature>
<feature type="region of interest" description="Disordered" evidence="2">
    <location>
        <begin position="1"/>
        <end position="23"/>
    </location>
</feature>
<feature type="short sequence motif" description="'HIGH' region">
    <location>
        <begin position="78"/>
        <end position="89"/>
    </location>
</feature>
<feature type="short sequence motif" description="'KMSKS' region">
    <location>
        <begin position="737"/>
        <end position="741"/>
    </location>
</feature>
<feature type="binding site" evidence="1">
    <location>
        <position position="740"/>
    </location>
    <ligand>
        <name>ATP</name>
        <dbReference type="ChEBI" id="CHEBI:30616"/>
    </ligand>
</feature>
<keyword id="KW-0030">Aminoacyl-tRNA synthetase</keyword>
<keyword id="KW-0067">ATP-binding</keyword>
<keyword id="KW-0963">Cytoplasm</keyword>
<keyword id="KW-0436">Ligase</keyword>
<keyword id="KW-0547">Nucleotide-binding</keyword>
<keyword id="KW-0648">Protein biosynthesis</keyword>
<keyword id="KW-1185">Reference proteome</keyword>
<name>SYL_MYCPA</name>
<organism>
    <name type="scientific">Mycolicibacterium paratuberculosis (strain ATCC BAA-968 / K-10)</name>
    <name type="common">Mycobacterium paratuberculosis</name>
    <dbReference type="NCBI Taxonomy" id="262316"/>
    <lineage>
        <taxon>Bacteria</taxon>
        <taxon>Bacillati</taxon>
        <taxon>Actinomycetota</taxon>
        <taxon>Actinomycetes</taxon>
        <taxon>Mycobacteriales</taxon>
        <taxon>Mycobacteriaceae</taxon>
        <taxon>Mycobacterium</taxon>
        <taxon>Mycobacterium avium complex (MAC)</taxon>
    </lineage>
</organism>